<sequence>MKHMFKNILFHKKGKHDKNDAIKKAFSLFSVPSNENERIIKFWPLKFKEKDEETLYIIKLCDNMYSKKYVILVSHLISLLLMYSVCLIVGNINDLFSVLKLTYILLHTFTAINIILILTLHATHYVEMFKSIKGEIFIFYIMMIFVIWCSWLFILFNNIKDLLPIVVNVNNFLYATYANNKINIVLGFFAYLPIFYLITIIPCRICYSCAFDILFFIMKVAIFSVYYLITMKSYILTDNIFMIISALVGSLFIFVIRYIIEIQRRLSFHNWNKQTKQIIKLKKTLKEEKQKLSTTNIEEIYNLINDSIGNYYNENKKQKETDWSIVNNLEKILNILKEDNLFSPDLKTINKKNYNHIYGYIMDLKKQKEIINDKIGSKEEPEAESESECVDESKEGSQIESIFESISDVKQKKKSDLAYTSSYEEKENEILKYDFNMNMDKENISIDIWNTKFLDRKSPNYDAFIKIGYILLNKYYISNQNISVKILYSLLYEMKKGYNDVPYHNSIHAAMVTKHCSILITSLDTVNILKDNEMAAFLISALGHDIGHFGRTNMFLKNCSNFLRIIYNDKSILENYHCSYLFNILSKEEHNIFKKEDLKTLTNLRQLIIEVILATDMSKHIKILAQFRIKSIKIKSYIEKNIILCLKMIIKAADLSHNCVDWSEHYLWVKRLVNEFYSEGDDLLERGFELNPLFDRKAHNNFIQIQRTFLRELVLPLISSLKTLDTSTITQLMLSHVKRNYSKWTKIEKDETKKEKYLNELLTDVPNSWKIVYAPNLNIYKL</sequence>
<accession>A0A077YBL0</accession>
<comment type="function">
    <text evidence="8 11">Specifically hydrolyzes the second messenger cGMP, which is a key regulator of many important physiological processes (Probable). Probably by regulating cGMP levels, required for sporozoite motility and invasion of the mosquito salivary glands (PubMed:25784701).</text>
</comment>
<comment type="catalytic activity">
    <reaction evidence="11">
        <text>3',5'-cyclic GMP + H2O = GMP + H(+)</text>
        <dbReference type="Rhea" id="RHEA:16957"/>
        <dbReference type="ChEBI" id="CHEBI:15377"/>
        <dbReference type="ChEBI" id="CHEBI:15378"/>
        <dbReference type="ChEBI" id="CHEBI:57746"/>
        <dbReference type="ChEBI" id="CHEBI:58115"/>
        <dbReference type="EC" id="3.1.4.35"/>
    </reaction>
</comment>
<comment type="cofactor">
    <cofactor evidence="6">
        <name>a divalent metal cation</name>
        <dbReference type="ChEBI" id="CHEBI:60240"/>
    </cofactor>
    <text evidence="6">Binds 2 divalent metal cations per subunit. Site 1 may preferentially bind zinc ions, while site 2 has a preference for magnesium and/or manganese ions.</text>
</comment>
<comment type="pathway">
    <text evidence="8">Purine metabolism; 3',5'-cyclic GMP degradation; GMP from 3',5'-cyclic GMP: step 1/1.</text>
</comment>
<comment type="subcellular location">
    <subcellularLocation>
        <location evidence="1">Membrane</location>
        <topology evidence="1">Multi-pass membrane protein</topology>
    </subcellularLocation>
    <subcellularLocation>
        <location evidence="8">Endoplasmic reticulum membrane</location>
        <topology evidence="1">Multi-pass membrane protein</topology>
    </subcellularLocation>
    <text evidence="8">Intracellular localization in blood stage forms and in sporozoites (PubMed:25784701). Partially, localizes to the endoplasmic reticulum in blood stage forms (PubMed:25784701).</text>
</comment>
<comment type="developmental stage">
    <text evidence="8">Expressed during the asexual blood stage (PubMed:25784701). In the mosquito vector, expressed in oocyst sporozoites, and salivary gland sporozoites (PubMed:25784701).</text>
</comment>
<comment type="disruption phenotype">
    <text evidence="8">During infection of Swiss Webster mice, lack of PDEgamma reduces peak blood stage parasitemia (PubMed:25784701). In the mosquito, development of oocyst sporozoites is not affected (PubMed:25784701). However, sporozoites released from the oocyst have higher cGMP levels, are immotile and fail to invade the salivary glands and, thus, parasite transmission to the mammalian host is impaired (PubMed:25784701). In addition, in sporozoites, mRNA levels of PDEbeta and PDEdelta are up-regulated and several transcripts encoding proteins involved in sporozoite invasion of mosquito salivary glands and sporozoite infectivity such as TRAP and CSP are down-regulated (PubMed:25784701).</text>
</comment>
<comment type="similarity">
    <text evidence="6">Belongs to the cyclic nucleotide phosphodiesterase family.</text>
</comment>
<proteinExistence type="evidence at protein level"/>
<reference evidence="13" key="1">
    <citation type="journal article" date="2014" name="BMC Biol.">
        <title>A comprehensive evaluation of rodent malaria parasite genomes and gene expression.</title>
        <authorList>
            <person name="Otto T.D."/>
            <person name="Bohme U."/>
            <person name="Jackson A.P."/>
            <person name="Hunt M."/>
            <person name="Franke-Fayard B."/>
            <person name="Hoeijmakers W.A."/>
            <person name="Religa A.A."/>
            <person name="Robertson L."/>
            <person name="Sanders M."/>
            <person name="Ogun S.A."/>
            <person name="Cunningham D."/>
            <person name="Erhart A."/>
            <person name="Billker O."/>
            <person name="Khan S.M."/>
            <person name="Stunnenberg H.G."/>
            <person name="Langhorne J."/>
            <person name="Holder A.A."/>
            <person name="Waters A.P."/>
            <person name="Newbold C.I."/>
            <person name="Pain A."/>
            <person name="Berriman M."/>
            <person name="Janse C.J."/>
        </authorList>
    </citation>
    <scope>NUCLEOTIDE SEQUENCE [LARGE SCALE GENOMIC DNA]</scope>
    <source>
        <strain evidence="13">17X</strain>
    </source>
</reference>
<reference evidence="10" key="2">
    <citation type="journal article" date="2015" name="MBio">
        <title>Cyclic GMP balance is critical for malaria parasite transmission from the mosquito to the mammalian host.</title>
        <authorList>
            <person name="Lakshmanan V."/>
            <person name="Fishbaugher M.E."/>
            <person name="Morrison B."/>
            <person name="Baldwin M."/>
            <person name="Macarulay M."/>
            <person name="Vaughan A.M."/>
            <person name="Mikolajczak S.A."/>
            <person name="Kappe S.H."/>
        </authorList>
    </citation>
    <scope>FUNCTION</scope>
    <scope>CATALYTIC ACTIVITY</scope>
    <scope>SUBCELLULAR LOCATION</scope>
    <scope>DEVELOPMENTAL STAGE</scope>
    <scope>DISRUPTION PHENOTYPE</scope>
    <source>
        <strain evidence="8">17XNL</strain>
    </source>
</reference>
<dbReference type="EC" id="3.1.4.35" evidence="11"/>
<dbReference type="EMBL" id="LK934642">
    <property type="protein sequence ID" value="CDU20569.1"/>
    <property type="molecule type" value="Genomic_DNA"/>
</dbReference>
<dbReference type="EMBL" id="LM993668">
    <property type="protein sequence ID" value="VTZ81530.1"/>
    <property type="molecule type" value="Genomic_DNA"/>
</dbReference>
<dbReference type="SMR" id="A0A077YBL0"/>
<dbReference type="EnsemblProtists" id="CDU20569">
    <property type="protein sequence ID" value="CDU20569"/>
    <property type="gene ID" value="PYYM_1423400"/>
</dbReference>
<dbReference type="EnsemblProtists" id="CDZ14196">
    <property type="protein sequence ID" value="CDZ14196"/>
    <property type="gene ID" value="PY17X_1421600"/>
</dbReference>
<dbReference type="VEuPathDB" id="PlasmoDB:PY01856"/>
<dbReference type="VEuPathDB" id="PlasmoDB:PY01857"/>
<dbReference type="VEuPathDB" id="PlasmoDB:PY17X_1421600"/>
<dbReference type="VEuPathDB" id="PlasmoDB:Py17XNL_001401064"/>
<dbReference type="VEuPathDB" id="PlasmoDB:PYYM_1423400"/>
<dbReference type="OMA" id="IFVIRYI"/>
<dbReference type="OrthoDB" id="342865at2759"/>
<dbReference type="PhylomeDB" id="A0A077YBL0"/>
<dbReference type="UniPathway" id="UPA00763">
    <property type="reaction ID" value="UER00748"/>
</dbReference>
<dbReference type="Proteomes" id="UP000072874">
    <property type="component" value="Chromosome 14"/>
</dbReference>
<dbReference type="Proteomes" id="UP000072904">
    <property type="component" value="Chromosome 14"/>
</dbReference>
<dbReference type="GO" id="GO:0005789">
    <property type="term" value="C:endoplasmic reticulum membrane"/>
    <property type="evidence" value="ECO:0007669"/>
    <property type="project" value="UniProtKB-SubCell"/>
</dbReference>
<dbReference type="GO" id="GO:0047555">
    <property type="term" value="F:3',5'-cyclic-GMP phosphodiesterase activity"/>
    <property type="evidence" value="ECO:0007669"/>
    <property type="project" value="UniProtKB-EC"/>
</dbReference>
<dbReference type="GO" id="GO:0046872">
    <property type="term" value="F:metal ion binding"/>
    <property type="evidence" value="ECO:0007669"/>
    <property type="project" value="UniProtKB-KW"/>
</dbReference>
<dbReference type="GO" id="GO:0046069">
    <property type="term" value="P:cGMP catabolic process"/>
    <property type="evidence" value="ECO:0007669"/>
    <property type="project" value="UniProtKB-UniPathway"/>
</dbReference>
<dbReference type="GO" id="GO:0007165">
    <property type="term" value="P:signal transduction"/>
    <property type="evidence" value="ECO:0007669"/>
    <property type="project" value="InterPro"/>
</dbReference>
<dbReference type="CDD" id="cd00077">
    <property type="entry name" value="HDc"/>
    <property type="match status" value="1"/>
</dbReference>
<dbReference type="Gene3D" id="1.10.1300.10">
    <property type="entry name" value="3'5'-cyclic nucleotide phosphodiesterase, catalytic domain"/>
    <property type="match status" value="1"/>
</dbReference>
<dbReference type="InterPro" id="IPR003607">
    <property type="entry name" value="HD/PDEase_dom"/>
</dbReference>
<dbReference type="InterPro" id="IPR023088">
    <property type="entry name" value="PDEase"/>
</dbReference>
<dbReference type="InterPro" id="IPR002073">
    <property type="entry name" value="PDEase_catalytic_dom"/>
</dbReference>
<dbReference type="InterPro" id="IPR036971">
    <property type="entry name" value="PDEase_catalytic_dom_sf"/>
</dbReference>
<dbReference type="InterPro" id="IPR023174">
    <property type="entry name" value="PDEase_CS"/>
</dbReference>
<dbReference type="PANTHER" id="PTHR11347">
    <property type="entry name" value="CYCLIC NUCLEOTIDE PHOSPHODIESTERASE"/>
    <property type="match status" value="1"/>
</dbReference>
<dbReference type="Pfam" id="PF00233">
    <property type="entry name" value="PDEase_I"/>
    <property type="match status" value="1"/>
</dbReference>
<dbReference type="PRINTS" id="PR00387">
    <property type="entry name" value="PDIESTERASE1"/>
</dbReference>
<dbReference type="SMART" id="SM00471">
    <property type="entry name" value="HDc"/>
    <property type="match status" value="1"/>
</dbReference>
<dbReference type="SUPFAM" id="SSF109604">
    <property type="entry name" value="HD-domain/PDEase-like"/>
    <property type="match status" value="1"/>
</dbReference>
<dbReference type="PROSITE" id="PS00126">
    <property type="entry name" value="PDEASE_I_1"/>
    <property type="match status" value="1"/>
</dbReference>
<dbReference type="PROSITE" id="PS51845">
    <property type="entry name" value="PDEASE_I_2"/>
    <property type="match status" value="1"/>
</dbReference>
<name>PDEG_PLAYE</name>
<keyword id="KW-0140">cGMP</keyword>
<keyword id="KW-0256">Endoplasmic reticulum</keyword>
<keyword id="KW-0378">Hydrolase</keyword>
<keyword id="KW-0472">Membrane</keyword>
<keyword id="KW-0479">Metal-binding</keyword>
<keyword id="KW-0812">Transmembrane</keyword>
<keyword id="KW-1133">Transmembrane helix</keyword>
<protein>
    <recommendedName>
        <fullName evidence="10">cGMP-specific 3',5'-cyclic phosphodiesterase gamma</fullName>
        <ecNumber evidence="11">3.1.4.35</ecNumber>
    </recommendedName>
</protein>
<gene>
    <name evidence="9" type="primary">PDEgamma</name>
    <name evidence="12" type="ORF">PY17X_1421600</name>
</gene>
<organism evidence="13">
    <name type="scientific">Plasmodium yoelii</name>
    <dbReference type="NCBI Taxonomy" id="5861"/>
    <lineage>
        <taxon>Eukaryota</taxon>
        <taxon>Sar</taxon>
        <taxon>Alveolata</taxon>
        <taxon>Apicomplexa</taxon>
        <taxon>Aconoidasida</taxon>
        <taxon>Haemosporida</taxon>
        <taxon>Plasmodiidae</taxon>
        <taxon>Plasmodium</taxon>
        <taxon>Plasmodium (Vinckeia)</taxon>
    </lineage>
</organism>
<feature type="chain" id="PRO_0000452649" description="cGMP-specific 3',5'-cyclic phosphodiesterase gamma">
    <location>
        <begin position="1"/>
        <end position="782"/>
    </location>
</feature>
<feature type="topological domain" description="Cytoplasmic" evidence="10">
    <location>
        <begin position="1"/>
        <end position="69"/>
    </location>
</feature>
<feature type="transmembrane region" description="Helical" evidence="1">
    <location>
        <begin position="70"/>
        <end position="90"/>
    </location>
</feature>
<feature type="topological domain" description="Extracellular" evidence="10">
    <location>
        <begin position="91"/>
        <end position="97"/>
    </location>
</feature>
<feature type="transmembrane region" description="Helical" evidence="1">
    <location>
        <begin position="98"/>
        <end position="118"/>
    </location>
</feature>
<feature type="topological domain" description="Cytoplasmic" evidence="10">
    <location>
        <begin position="119"/>
        <end position="135"/>
    </location>
</feature>
<feature type="transmembrane region" description="Helical" evidence="1">
    <location>
        <begin position="136"/>
        <end position="156"/>
    </location>
</feature>
<feature type="topological domain" description="Extracellular" evidence="10">
    <location>
        <begin position="157"/>
        <end position="181"/>
    </location>
</feature>
<feature type="transmembrane region" description="Helical" evidence="1">
    <location>
        <begin position="182"/>
        <end position="202"/>
    </location>
</feature>
<feature type="topological domain" description="Cytoplasmic" evidence="10">
    <location>
        <begin position="203"/>
        <end position="208"/>
    </location>
</feature>
<feature type="transmembrane region" description="Helical" evidence="1">
    <location>
        <begin position="209"/>
        <end position="229"/>
    </location>
</feature>
<feature type="topological domain" description="Extracellular" evidence="10">
    <location>
        <begin position="230"/>
        <end position="239"/>
    </location>
</feature>
<feature type="transmembrane region" description="Helical" evidence="1">
    <location>
        <begin position="240"/>
        <end position="260"/>
    </location>
</feature>
<feature type="topological domain" description="Cytoplasmic" evidence="10">
    <location>
        <begin position="261"/>
        <end position="782"/>
    </location>
</feature>
<feature type="domain" description="PDEase" evidence="5">
    <location>
        <begin position="423"/>
        <end position="751"/>
    </location>
</feature>
<feature type="region of interest" description="Disordered" evidence="7">
    <location>
        <begin position="376"/>
        <end position="396"/>
    </location>
</feature>
<feature type="compositionally biased region" description="Acidic residues" evidence="7">
    <location>
        <begin position="381"/>
        <end position="390"/>
    </location>
</feature>
<feature type="active site" description="Proton donor" evidence="2">
    <location>
        <position position="504"/>
    </location>
</feature>
<feature type="binding site" evidence="3">
    <location>
        <begin position="504"/>
        <end position="508"/>
    </location>
    <ligand>
        <name>a nucleoside 3',5'-cyclic phosphate</name>
        <dbReference type="ChEBI" id="CHEBI:58464"/>
    </ligand>
</feature>
<feature type="binding site" evidence="4">
    <location>
        <position position="508"/>
    </location>
    <ligand>
        <name>a divalent metal cation</name>
        <dbReference type="ChEBI" id="CHEBI:60240"/>
        <label>1</label>
    </ligand>
</feature>
<feature type="binding site" evidence="4">
    <location>
        <position position="544"/>
    </location>
    <ligand>
        <name>a divalent metal cation</name>
        <dbReference type="ChEBI" id="CHEBI:60240"/>
        <label>1</label>
    </ligand>
</feature>
<feature type="binding site" evidence="4">
    <location>
        <position position="545"/>
    </location>
    <ligand>
        <name>a divalent metal cation</name>
        <dbReference type="ChEBI" id="CHEBI:60240"/>
        <label>1</label>
    </ligand>
</feature>
<feature type="binding site" evidence="4">
    <location>
        <position position="545"/>
    </location>
    <ligand>
        <name>a divalent metal cation</name>
        <dbReference type="ChEBI" id="CHEBI:60240"/>
        <label>2</label>
    </ligand>
</feature>
<feature type="binding site" evidence="3">
    <location>
        <position position="545"/>
    </location>
    <ligand>
        <name>a nucleoside 3',5'-cyclic phosphate</name>
        <dbReference type="ChEBI" id="CHEBI:58464"/>
    </ligand>
</feature>
<feature type="binding site" evidence="4">
    <location>
        <position position="654"/>
    </location>
    <ligand>
        <name>a divalent metal cation</name>
        <dbReference type="ChEBI" id="CHEBI:60240"/>
        <label>1</label>
    </ligand>
</feature>
<feature type="binding site" evidence="3">
    <location>
        <position position="654"/>
    </location>
    <ligand>
        <name>a nucleoside 3',5'-cyclic phosphate</name>
        <dbReference type="ChEBI" id="CHEBI:58464"/>
    </ligand>
</feature>
<feature type="binding site" evidence="3">
    <location>
        <position position="706"/>
    </location>
    <ligand>
        <name>a nucleoside 3',5'-cyclic phosphate</name>
        <dbReference type="ChEBI" id="CHEBI:58464"/>
    </ligand>
</feature>
<evidence type="ECO:0000255" key="1"/>
<evidence type="ECO:0000255" key="2">
    <source>
        <dbReference type="PIRSR" id="PIRSR623088-1"/>
    </source>
</evidence>
<evidence type="ECO:0000255" key="3">
    <source>
        <dbReference type="PIRSR" id="PIRSR623088-2"/>
    </source>
</evidence>
<evidence type="ECO:0000255" key="4">
    <source>
        <dbReference type="PIRSR" id="PIRSR623088-3"/>
    </source>
</evidence>
<evidence type="ECO:0000255" key="5">
    <source>
        <dbReference type="PROSITE-ProRule" id="PRU01192"/>
    </source>
</evidence>
<evidence type="ECO:0000255" key="6">
    <source>
        <dbReference type="RuleBase" id="RU363067"/>
    </source>
</evidence>
<evidence type="ECO:0000256" key="7">
    <source>
        <dbReference type="SAM" id="MobiDB-lite"/>
    </source>
</evidence>
<evidence type="ECO:0000269" key="8">
    <source>
    </source>
</evidence>
<evidence type="ECO:0000303" key="9">
    <source>
    </source>
</evidence>
<evidence type="ECO:0000305" key="10"/>
<evidence type="ECO:0000305" key="11">
    <source>
    </source>
</evidence>
<evidence type="ECO:0000312" key="12">
    <source>
        <dbReference type="EMBL" id="VTZ81530.1"/>
    </source>
</evidence>
<evidence type="ECO:0000312" key="13">
    <source>
        <dbReference type="Proteomes" id="UP000072874"/>
    </source>
</evidence>